<sequence>MRTFTPKPGDINRRWLVIDAEDVVLGRLASQTAILLRGKHKATYAPHVDGGDYVIIVNAAKVALTGSKRDQKVAYRHSGYPGGLKATSYVDLLEQNPEKAVEKAIRGMIPKNSLGRQVLSKLKVYAGAEHPHAAQQPEAYTIHQVAQ</sequence>
<comment type="function">
    <text evidence="1">This protein is one of the early assembly proteins of the 50S ribosomal subunit, although it is not seen to bind rRNA by itself. It is important during the early stages of 50S assembly.</text>
</comment>
<comment type="subunit">
    <text evidence="1">Part of the 50S ribosomal subunit.</text>
</comment>
<comment type="similarity">
    <text evidence="1">Belongs to the universal ribosomal protein uL13 family.</text>
</comment>
<gene>
    <name evidence="1" type="primary">rplM</name>
    <name type="ordered locus">Krad_0720</name>
</gene>
<feature type="chain" id="PRO_1000087091" description="Large ribosomal subunit protein uL13">
    <location>
        <begin position="1"/>
        <end position="147"/>
    </location>
</feature>
<proteinExistence type="inferred from homology"/>
<keyword id="KW-1185">Reference proteome</keyword>
<keyword id="KW-0687">Ribonucleoprotein</keyword>
<keyword id="KW-0689">Ribosomal protein</keyword>
<evidence type="ECO:0000255" key="1">
    <source>
        <dbReference type="HAMAP-Rule" id="MF_01366"/>
    </source>
</evidence>
<evidence type="ECO:0000305" key="2"/>
<name>RL13_KINRD</name>
<reference key="1">
    <citation type="journal article" date="2008" name="PLoS ONE">
        <title>Survival in nuclear waste, extreme resistance, and potential applications gleaned from the genome sequence of Kineococcus radiotolerans SRS30216.</title>
        <authorList>
            <person name="Bagwell C.E."/>
            <person name="Bhat S."/>
            <person name="Hawkins G.M."/>
            <person name="Smith B.W."/>
            <person name="Biswas T."/>
            <person name="Hoover T.R."/>
            <person name="Saunders E."/>
            <person name="Han C.S."/>
            <person name="Tsodikov O.V."/>
            <person name="Shimkets L.J."/>
        </authorList>
    </citation>
    <scope>NUCLEOTIDE SEQUENCE [LARGE SCALE GENOMIC DNA]</scope>
    <source>
        <strain>ATCC BAA-149 / DSM 14245 / SRS30216</strain>
    </source>
</reference>
<dbReference type="EMBL" id="CP000750">
    <property type="protein sequence ID" value="ABS02209.1"/>
    <property type="molecule type" value="Genomic_DNA"/>
</dbReference>
<dbReference type="RefSeq" id="WP_012084946.1">
    <property type="nucleotide sequence ID" value="NC_009664.2"/>
</dbReference>
<dbReference type="SMR" id="A6W5X0"/>
<dbReference type="STRING" id="266940.Krad_0720"/>
<dbReference type="KEGG" id="kra:Krad_0720"/>
<dbReference type="eggNOG" id="COG0102">
    <property type="taxonomic scope" value="Bacteria"/>
</dbReference>
<dbReference type="HOGENOM" id="CLU_082184_2_2_11"/>
<dbReference type="OrthoDB" id="9801330at2"/>
<dbReference type="Proteomes" id="UP000001116">
    <property type="component" value="Chromosome"/>
</dbReference>
<dbReference type="GO" id="GO:0022625">
    <property type="term" value="C:cytosolic large ribosomal subunit"/>
    <property type="evidence" value="ECO:0007669"/>
    <property type="project" value="TreeGrafter"/>
</dbReference>
<dbReference type="GO" id="GO:0003729">
    <property type="term" value="F:mRNA binding"/>
    <property type="evidence" value="ECO:0007669"/>
    <property type="project" value="TreeGrafter"/>
</dbReference>
<dbReference type="GO" id="GO:0003735">
    <property type="term" value="F:structural constituent of ribosome"/>
    <property type="evidence" value="ECO:0007669"/>
    <property type="project" value="InterPro"/>
</dbReference>
<dbReference type="GO" id="GO:0017148">
    <property type="term" value="P:negative regulation of translation"/>
    <property type="evidence" value="ECO:0007669"/>
    <property type="project" value="TreeGrafter"/>
</dbReference>
<dbReference type="GO" id="GO:0006412">
    <property type="term" value="P:translation"/>
    <property type="evidence" value="ECO:0007669"/>
    <property type="project" value="UniProtKB-UniRule"/>
</dbReference>
<dbReference type="CDD" id="cd00392">
    <property type="entry name" value="Ribosomal_L13"/>
    <property type="match status" value="1"/>
</dbReference>
<dbReference type="FunFam" id="3.90.1180.10:FF:000001">
    <property type="entry name" value="50S ribosomal protein L13"/>
    <property type="match status" value="1"/>
</dbReference>
<dbReference type="Gene3D" id="3.90.1180.10">
    <property type="entry name" value="Ribosomal protein L13"/>
    <property type="match status" value="1"/>
</dbReference>
<dbReference type="HAMAP" id="MF_01366">
    <property type="entry name" value="Ribosomal_uL13"/>
    <property type="match status" value="1"/>
</dbReference>
<dbReference type="InterPro" id="IPR005822">
    <property type="entry name" value="Ribosomal_uL13"/>
</dbReference>
<dbReference type="InterPro" id="IPR005823">
    <property type="entry name" value="Ribosomal_uL13_bac-type"/>
</dbReference>
<dbReference type="InterPro" id="IPR023563">
    <property type="entry name" value="Ribosomal_uL13_CS"/>
</dbReference>
<dbReference type="InterPro" id="IPR036899">
    <property type="entry name" value="Ribosomal_uL13_sf"/>
</dbReference>
<dbReference type="NCBIfam" id="TIGR01066">
    <property type="entry name" value="rplM_bact"/>
    <property type="match status" value="1"/>
</dbReference>
<dbReference type="PANTHER" id="PTHR11545:SF2">
    <property type="entry name" value="LARGE RIBOSOMAL SUBUNIT PROTEIN UL13M"/>
    <property type="match status" value="1"/>
</dbReference>
<dbReference type="PANTHER" id="PTHR11545">
    <property type="entry name" value="RIBOSOMAL PROTEIN L13"/>
    <property type="match status" value="1"/>
</dbReference>
<dbReference type="Pfam" id="PF00572">
    <property type="entry name" value="Ribosomal_L13"/>
    <property type="match status" value="1"/>
</dbReference>
<dbReference type="PIRSF" id="PIRSF002181">
    <property type="entry name" value="Ribosomal_L13"/>
    <property type="match status" value="1"/>
</dbReference>
<dbReference type="SUPFAM" id="SSF52161">
    <property type="entry name" value="Ribosomal protein L13"/>
    <property type="match status" value="1"/>
</dbReference>
<dbReference type="PROSITE" id="PS00783">
    <property type="entry name" value="RIBOSOMAL_L13"/>
    <property type="match status" value="1"/>
</dbReference>
<accession>A6W5X0</accession>
<organism>
    <name type="scientific">Kineococcus radiotolerans (strain ATCC BAA-149 / DSM 14245 / SRS30216)</name>
    <dbReference type="NCBI Taxonomy" id="266940"/>
    <lineage>
        <taxon>Bacteria</taxon>
        <taxon>Bacillati</taxon>
        <taxon>Actinomycetota</taxon>
        <taxon>Actinomycetes</taxon>
        <taxon>Kineosporiales</taxon>
        <taxon>Kineosporiaceae</taxon>
        <taxon>Kineococcus</taxon>
    </lineage>
</organism>
<protein>
    <recommendedName>
        <fullName evidence="1">Large ribosomal subunit protein uL13</fullName>
    </recommendedName>
    <alternativeName>
        <fullName evidence="2">50S ribosomal protein L13</fullName>
    </alternativeName>
</protein>